<evidence type="ECO:0000250" key="1"/>
<evidence type="ECO:0000255" key="2"/>
<evidence type="ECO:0000305" key="3"/>
<sequence>MAKLILATFAVVFMALAATSLAGDPDMLQDVCVADYKSLKGPLRLNGFPCKRIENVTANDFFFDGLMKAGNTGNAVGSVVTAASVESLPGLNTMGVSMARIDYAPWGLNPPHTHPRATEIIFVVEGSLDVGFVTTANKLFTRTVCKGEVFVFPRGLVHFQKNNGNTPAFAIAALNSQLPGTQSIAAALFGAAPPLPSDTLARAFQVDGGMVEFIKSKFVPPKY</sequence>
<keyword id="KW-0052">Apoplast</keyword>
<keyword id="KW-1015">Disulfide bond</keyword>
<keyword id="KW-0325">Glycoprotein</keyword>
<keyword id="KW-0464">Manganese</keyword>
<keyword id="KW-0479">Metal-binding</keyword>
<keyword id="KW-1185">Reference proteome</keyword>
<keyword id="KW-0964">Secreted</keyword>
<keyword id="KW-0732">Signal</keyword>
<reference key="1">
    <citation type="journal article" date="2002" name="Nature">
        <title>The genome sequence and structure of rice chromosome 1.</title>
        <authorList>
            <person name="Sasaki T."/>
            <person name="Matsumoto T."/>
            <person name="Yamamoto K."/>
            <person name="Sakata K."/>
            <person name="Baba T."/>
            <person name="Katayose Y."/>
            <person name="Wu J."/>
            <person name="Niimura Y."/>
            <person name="Cheng Z."/>
            <person name="Nagamura Y."/>
            <person name="Antonio B.A."/>
            <person name="Kanamori H."/>
            <person name="Hosokawa S."/>
            <person name="Masukawa M."/>
            <person name="Arikawa K."/>
            <person name="Chiden Y."/>
            <person name="Hayashi M."/>
            <person name="Okamoto M."/>
            <person name="Ando T."/>
            <person name="Aoki H."/>
            <person name="Arita K."/>
            <person name="Hamada M."/>
            <person name="Harada C."/>
            <person name="Hijishita S."/>
            <person name="Honda M."/>
            <person name="Ichikawa Y."/>
            <person name="Idonuma A."/>
            <person name="Iijima M."/>
            <person name="Ikeda M."/>
            <person name="Ikeno M."/>
            <person name="Ito S."/>
            <person name="Ito T."/>
            <person name="Ito Y."/>
            <person name="Ito Y."/>
            <person name="Iwabuchi A."/>
            <person name="Kamiya K."/>
            <person name="Karasawa W."/>
            <person name="Katagiri S."/>
            <person name="Kikuta A."/>
            <person name="Kobayashi N."/>
            <person name="Kono I."/>
            <person name="Machita K."/>
            <person name="Maehara T."/>
            <person name="Mizuno H."/>
            <person name="Mizubayashi T."/>
            <person name="Mukai Y."/>
            <person name="Nagasaki H."/>
            <person name="Nakashima M."/>
            <person name="Nakama Y."/>
            <person name="Nakamichi Y."/>
            <person name="Nakamura M."/>
            <person name="Namiki N."/>
            <person name="Negishi M."/>
            <person name="Ohta I."/>
            <person name="Ono N."/>
            <person name="Saji S."/>
            <person name="Sakai K."/>
            <person name="Shibata M."/>
            <person name="Shimokawa T."/>
            <person name="Shomura A."/>
            <person name="Song J."/>
            <person name="Takazaki Y."/>
            <person name="Terasawa K."/>
            <person name="Tsuji K."/>
            <person name="Waki K."/>
            <person name="Yamagata H."/>
            <person name="Yamane H."/>
            <person name="Yoshiki S."/>
            <person name="Yoshihara R."/>
            <person name="Yukawa K."/>
            <person name="Zhong H."/>
            <person name="Iwama H."/>
            <person name="Endo T."/>
            <person name="Ito H."/>
            <person name="Hahn J.H."/>
            <person name="Kim H.-I."/>
            <person name="Eun M.-Y."/>
            <person name="Yano M."/>
            <person name="Jiang J."/>
            <person name="Gojobori T."/>
        </authorList>
    </citation>
    <scope>NUCLEOTIDE SEQUENCE [LARGE SCALE GENOMIC DNA]</scope>
    <source>
        <strain>cv. Nipponbare</strain>
    </source>
</reference>
<reference key="2">
    <citation type="journal article" date="2005" name="Nature">
        <title>The map-based sequence of the rice genome.</title>
        <authorList>
            <consortium name="International rice genome sequencing project (IRGSP)"/>
        </authorList>
    </citation>
    <scope>NUCLEOTIDE SEQUENCE [LARGE SCALE GENOMIC DNA]</scope>
    <source>
        <strain>cv. Nipponbare</strain>
    </source>
</reference>
<reference key="3">
    <citation type="journal article" date="2008" name="Nucleic Acids Res.">
        <title>The rice annotation project database (RAP-DB): 2008 update.</title>
        <authorList>
            <consortium name="The rice annotation project (RAP)"/>
        </authorList>
    </citation>
    <scope>GENOME REANNOTATION</scope>
    <source>
        <strain>cv. Nipponbare</strain>
    </source>
</reference>
<reference key="4">
    <citation type="journal article" date="2013" name="Rice">
        <title>Improvement of the Oryza sativa Nipponbare reference genome using next generation sequence and optical map data.</title>
        <authorList>
            <person name="Kawahara Y."/>
            <person name="de la Bastide M."/>
            <person name="Hamilton J.P."/>
            <person name="Kanamori H."/>
            <person name="McCombie W.R."/>
            <person name="Ouyang S."/>
            <person name="Schwartz D.C."/>
            <person name="Tanaka T."/>
            <person name="Wu J."/>
            <person name="Zhou S."/>
            <person name="Childs K.L."/>
            <person name="Davidson R.M."/>
            <person name="Lin H."/>
            <person name="Quesada-Ocampo L."/>
            <person name="Vaillancourt B."/>
            <person name="Sakai H."/>
            <person name="Lee S.S."/>
            <person name="Kim J."/>
            <person name="Numa H."/>
            <person name="Itoh T."/>
            <person name="Buell C.R."/>
            <person name="Matsumoto T."/>
        </authorList>
    </citation>
    <scope>GENOME REANNOTATION</scope>
    <source>
        <strain>cv. Nipponbare</strain>
    </source>
</reference>
<reference key="5">
    <citation type="journal article" date="2005" name="PLoS Biol.">
        <title>The genomes of Oryza sativa: a history of duplications.</title>
        <authorList>
            <person name="Yu J."/>
            <person name="Wang J."/>
            <person name="Lin W."/>
            <person name="Li S."/>
            <person name="Li H."/>
            <person name="Zhou J."/>
            <person name="Ni P."/>
            <person name="Dong W."/>
            <person name="Hu S."/>
            <person name="Zeng C."/>
            <person name="Zhang J."/>
            <person name="Zhang Y."/>
            <person name="Li R."/>
            <person name="Xu Z."/>
            <person name="Li S."/>
            <person name="Li X."/>
            <person name="Zheng H."/>
            <person name="Cong L."/>
            <person name="Lin L."/>
            <person name="Yin J."/>
            <person name="Geng J."/>
            <person name="Li G."/>
            <person name="Shi J."/>
            <person name="Liu J."/>
            <person name="Lv H."/>
            <person name="Li J."/>
            <person name="Wang J."/>
            <person name="Deng Y."/>
            <person name="Ran L."/>
            <person name="Shi X."/>
            <person name="Wang X."/>
            <person name="Wu Q."/>
            <person name="Li C."/>
            <person name="Ren X."/>
            <person name="Wang J."/>
            <person name="Wang X."/>
            <person name="Li D."/>
            <person name="Liu D."/>
            <person name="Zhang X."/>
            <person name="Ji Z."/>
            <person name="Zhao W."/>
            <person name="Sun Y."/>
            <person name="Zhang Z."/>
            <person name="Bao J."/>
            <person name="Han Y."/>
            <person name="Dong L."/>
            <person name="Ji J."/>
            <person name="Chen P."/>
            <person name="Wu S."/>
            <person name="Liu J."/>
            <person name="Xiao Y."/>
            <person name="Bu D."/>
            <person name="Tan J."/>
            <person name="Yang L."/>
            <person name="Ye C."/>
            <person name="Zhang J."/>
            <person name="Xu J."/>
            <person name="Zhou Y."/>
            <person name="Yu Y."/>
            <person name="Zhang B."/>
            <person name="Zhuang S."/>
            <person name="Wei H."/>
            <person name="Liu B."/>
            <person name="Lei M."/>
            <person name="Yu H."/>
            <person name="Li Y."/>
            <person name="Xu H."/>
            <person name="Wei S."/>
            <person name="He X."/>
            <person name="Fang L."/>
            <person name="Zhang Z."/>
            <person name="Zhang Y."/>
            <person name="Huang X."/>
            <person name="Su Z."/>
            <person name="Tong W."/>
            <person name="Li J."/>
            <person name="Tong Z."/>
            <person name="Li S."/>
            <person name="Ye J."/>
            <person name="Wang L."/>
            <person name="Fang L."/>
            <person name="Lei T."/>
            <person name="Chen C.-S."/>
            <person name="Chen H.-C."/>
            <person name="Xu Z."/>
            <person name="Li H."/>
            <person name="Huang H."/>
            <person name="Zhang F."/>
            <person name="Xu H."/>
            <person name="Li N."/>
            <person name="Zhao C."/>
            <person name="Li S."/>
            <person name="Dong L."/>
            <person name="Huang Y."/>
            <person name="Li L."/>
            <person name="Xi Y."/>
            <person name="Qi Q."/>
            <person name="Li W."/>
            <person name="Zhang B."/>
            <person name="Hu W."/>
            <person name="Zhang Y."/>
            <person name="Tian X."/>
            <person name="Jiao Y."/>
            <person name="Liang X."/>
            <person name="Jin J."/>
            <person name="Gao L."/>
            <person name="Zheng W."/>
            <person name="Hao B."/>
            <person name="Liu S.-M."/>
            <person name="Wang W."/>
            <person name="Yuan L."/>
            <person name="Cao M."/>
            <person name="McDermott J."/>
            <person name="Samudrala R."/>
            <person name="Wang J."/>
            <person name="Wong G.K.-S."/>
            <person name="Yang H."/>
        </authorList>
    </citation>
    <scope>NUCLEOTIDE SEQUENCE [LARGE SCALE GENOMIC DNA]</scope>
    <source>
        <strain>cv. Nipponbare</strain>
    </source>
</reference>
<reference key="6">
    <citation type="journal article" date="2003" name="Science">
        <title>Collection, mapping, and annotation of over 28,000 cDNA clones from japonica rice.</title>
        <authorList>
            <consortium name="The rice full-length cDNA consortium"/>
        </authorList>
    </citation>
    <scope>NUCLEOTIDE SEQUENCE [LARGE SCALE MRNA]</scope>
    <source>
        <strain>cv. Nipponbare</strain>
    </source>
</reference>
<reference key="7">
    <citation type="online journal article" date="1998" name="Plant Gene Register">
        <title>The rice genome expresses at least six different genes for oxalate oxidase/germin-like proteins.</title>
        <authorList>
            <person name="Membre N."/>
            <person name="Bernier F."/>
        </authorList>
        <locator>PGR98-021</locator>
    </citation>
    <scope>NUCLEOTIDE SEQUENCE [MRNA] OF 126-223</scope>
    <source>
        <strain>cv. Nipponbare</strain>
    </source>
</reference>
<dbReference type="EMBL" id="AP003683">
    <property type="protein sequence ID" value="BAB64690.1"/>
    <property type="molecule type" value="Genomic_DNA"/>
</dbReference>
<dbReference type="EMBL" id="AP003683">
    <property type="protein sequence ID" value="BAD87852.1"/>
    <property type="status" value="ALT_SEQ"/>
    <property type="molecule type" value="Genomic_DNA"/>
</dbReference>
<dbReference type="EMBL" id="AP008207">
    <property type="protein sequence ID" value="BAF07330.1"/>
    <property type="molecule type" value="Genomic_DNA"/>
</dbReference>
<dbReference type="EMBL" id="AP014957">
    <property type="protein sequence ID" value="BAS76249.1"/>
    <property type="molecule type" value="Genomic_DNA"/>
</dbReference>
<dbReference type="EMBL" id="CM000138">
    <property type="protein sequence ID" value="EAZ14851.1"/>
    <property type="molecule type" value="Genomic_DNA"/>
</dbReference>
<dbReference type="EMBL" id="AK060864">
    <property type="status" value="NOT_ANNOTATED_CDS"/>
    <property type="molecule type" value="mRNA"/>
</dbReference>
<dbReference type="EMBL" id="AF072695">
    <property type="protein sequence ID" value="AAC25778.1"/>
    <property type="molecule type" value="mRNA"/>
</dbReference>
<dbReference type="PIR" id="T02931">
    <property type="entry name" value="T02931"/>
</dbReference>
<dbReference type="RefSeq" id="XP_015644058.1">
    <property type="nucleotide sequence ID" value="XM_015788572.1"/>
</dbReference>
<dbReference type="SMR" id="Q942A8"/>
<dbReference type="FunCoup" id="Q942A8">
    <property type="interactions" value="37"/>
</dbReference>
<dbReference type="STRING" id="39947.Q942A8"/>
<dbReference type="GlyCosmos" id="Q942A8">
    <property type="glycosylation" value="1 site, No reported glycans"/>
</dbReference>
<dbReference type="PaxDb" id="39947-Q942A8"/>
<dbReference type="EnsemblPlants" id="Os01t0952000-02">
    <property type="protein sequence ID" value="Os01t0952000-02"/>
    <property type="gene ID" value="Os01g0952000"/>
</dbReference>
<dbReference type="Gramene" id="Os01t0952000-02">
    <property type="protein sequence ID" value="Os01t0952000-02"/>
    <property type="gene ID" value="Os01g0952000"/>
</dbReference>
<dbReference type="KEGG" id="dosa:Os01g0952000"/>
<dbReference type="eggNOG" id="ENOG502QQ4A">
    <property type="taxonomic scope" value="Eukaryota"/>
</dbReference>
<dbReference type="HOGENOM" id="CLU_015790_0_3_1"/>
<dbReference type="InParanoid" id="Q942A8"/>
<dbReference type="OMA" id="VAFNSQD"/>
<dbReference type="OrthoDB" id="1921208at2759"/>
<dbReference type="Proteomes" id="UP000000763">
    <property type="component" value="Chromosome 1"/>
</dbReference>
<dbReference type="Proteomes" id="UP000007752">
    <property type="component" value="Chromosome 1"/>
</dbReference>
<dbReference type="Proteomes" id="UP000059680">
    <property type="component" value="Chromosome 1"/>
</dbReference>
<dbReference type="ExpressionAtlas" id="Q942A8">
    <property type="expression patterns" value="baseline and differential"/>
</dbReference>
<dbReference type="GO" id="GO:0048046">
    <property type="term" value="C:apoplast"/>
    <property type="evidence" value="ECO:0007669"/>
    <property type="project" value="UniProtKB-SubCell"/>
</dbReference>
<dbReference type="GO" id="GO:0009506">
    <property type="term" value="C:plasmodesma"/>
    <property type="evidence" value="ECO:0000318"/>
    <property type="project" value="GO_Central"/>
</dbReference>
<dbReference type="GO" id="GO:0030145">
    <property type="term" value="F:manganese ion binding"/>
    <property type="evidence" value="ECO:0007669"/>
    <property type="project" value="InterPro"/>
</dbReference>
<dbReference type="GO" id="GO:0010497">
    <property type="term" value="P:plasmodesmata-mediated intercellular transport"/>
    <property type="evidence" value="ECO:0000318"/>
    <property type="project" value="GO_Central"/>
</dbReference>
<dbReference type="GO" id="GO:2000280">
    <property type="term" value="P:regulation of root development"/>
    <property type="evidence" value="ECO:0000318"/>
    <property type="project" value="GO_Central"/>
</dbReference>
<dbReference type="CDD" id="cd02241">
    <property type="entry name" value="cupin_OxOx"/>
    <property type="match status" value="1"/>
</dbReference>
<dbReference type="FunFam" id="2.60.120.10:FF:000025">
    <property type="entry name" value="germin-like protein subfamily 2 member 1"/>
    <property type="match status" value="1"/>
</dbReference>
<dbReference type="Gene3D" id="2.60.120.10">
    <property type="entry name" value="Jelly Rolls"/>
    <property type="match status" value="1"/>
</dbReference>
<dbReference type="InterPro" id="IPR006045">
    <property type="entry name" value="Cupin_1"/>
</dbReference>
<dbReference type="InterPro" id="IPR001929">
    <property type="entry name" value="Germin"/>
</dbReference>
<dbReference type="InterPro" id="IPR019780">
    <property type="entry name" value="Germin_Mn-BS"/>
</dbReference>
<dbReference type="InterPro" id="IPR014710">
    <property type="entry name" value="RmlC-like_jellyroll"/>
</dbReference>
<dbReference type="InterPro" id="IPR011051">
    <property type="entry name" value="RmlC_Cupin_sf"/>
</dbReference>
<dbReference type="PANTHER" id="PTHR31238">
    <property type="entry name" value="GERMIN-LIKE PROTEIN SUBFAMILY 3 MEMBER 3"/>
    <property type="match status" value="1"/>
</dbReference>
<dbReference type="Pfam" id="PF00190">
    <property type="entry name" value="Cupin_1"/>
    <property type="match status" value="1"/>
</dbReference>
<dbReference type="PRINTS" id="PR00325">
    <property type="entry name" value="GERMIN"/>
</dbReference>
<dbReference type="SMART" id="SM00835">
    <property type="entry name" value="Cupin_1"/>
    <property type="match status" value="1"/>
</dbReference>
<dbReference type="SUPFAM" id="SSF51182">
    <property type="entry name" value="RmlC-like cupins"/>
    <property type="match status" value="1"/>
</dbReference>
<dbReference type="PROSITE" id="PS00725">
    <property type="entry name" value="GERMIN"/>
    <property type="match status" value="1"/>
</dbReference>
<protein>
    <recommendedName>
        <fullName>Germin-like protein 1-3</fullName>
    </recommendedName>
    <alternativeName>
        <fullName>Germin-like protein 8</fullName>
        <shortName>OsGER8</shortName>
    </alternativeName>
</protein>
<feature type="signal peptide" evidence="2">
    <location>
        <begin position="1"/>
        <end position="22"/>
    </location>
</feature>
<feature type="chain" id="PRO_0000365496" description="Germin-like protein 1-3">
    <location>
        <begin position="23"/>
        <end position="223"/>
    </location>
</feature>
<feature type="domain" description="Cupin type-1" evidence="2">
    <location>
        <begin position="64"/>
        <end position="212"/>
    </location>
</feature>
<feature type="binding site" evidence="1">
    <location>
        <position position="112"/>
    </location>
    <ligand>
        <name>Mn(2+)</name>
        <dbReference type="ChEBI" id="CHEBI:29035"/>
    </ligand>
</feature>
<feature type="binding site" evidence="1">
    <location>
        <position position="114"/>
    </location>
    <ligand>
        <name>Mn(2+)</name>
        <dbReference type="ChEBI" id="CHEBI:29035"/>
    </ligand>
</feature>
<feature type="binding site" evidence="1">
    <location>
        <position position="119"/>
    </location>
    <ligand>
        <name>Mn(2+)</name>
        <dbReference type="ChEBI" id="CHEBI:29035"/>
    </ligand>
</feature>
<feature type="binding site" evidence="1">
    <location>
        <position position="158"/>
    </location>
    <ligand>
        <name>Mn(2+)</name>
        <dbReference type="ChEBI" id="CHEBI:29035"/>
    </ligand>
</feature>
<feature type="glycosylation site" description="N-linked (GlcNAc...) asparagine" evidence="2">
    <location>
        <position position="55"/>
    </location>
</feature>
<feature type="disulfide bond" evidence="1">
    <location>
        <begin position="32"/>
        <end position="50"/>
    </location>
</feature>
<feature type="sequence conflict" description="In Ref. 6; AK060864." evidence="3" ref="6">
    <original>A</original>
    <variation>V</variation>
    <location>
        <position position="168"/>
    </location>
</feature>
<gene>
    <name type="primary">GER8</name>
    <name type="ordered locus">Os01g0952000</name>
    <name type="ordered locus">LOC_Os01g72290</name>
    <name type="ORF">OsJ_004676</name>
    <name type="ORF">P0431G06.1-1</name>
    <name type="ORF">P0431G06.1-2</name>
</gene>
<proteinExistence type="evidence at transcript level"/>
<name>GL13_ORYSJ</name>
<accession>Q942A8</accession>
<accession>A0A0N7KEF2</accession>
<accession>O81386</accession>
<accession>Q5JKZ6</accession>
<comment type="function">
    <text>May play a role in plant defense. Probably has no oxalate oxidase activity even if the active site is conserved.</text>
</comment>
<comment type="subunit">
    <text evidence="1">Oligomer (believed to be a pentamer but probably hexamer).</text>
</comment>
<comment type="subcellular location">
    <subcellularLocation>
        <location evidence="1">Secreted</location>
        <location evidence="1">Extracellular space</location>
        <location evidence="1">Apoplast</location>
    </subcellularLocation>
</comment>
<comment type="similarity">
    <text evidence="3">Belongs to the germin family.</text>
</comment>
<comment type="sequence caution" evidence="3">
    <conflict type="erroneous gene model prediction">
        <sequence resource="EMBL-CDS" id="BAD87852"/>
    </conflict>
</comment>
<organism>
    <name type="scientific">Oryza sativa subsp. japonica</name>
    <name type="common">Rice</name>
    <dbReference type="NCBI Taxonomy" id="39947"/>
    <lineage>
        <taxon>Eukaryota</taxon>
        <taxon>Viridiplantae</taxon>
        <taxon>Streptophyta</taxon>
        <taxon>Embryophyta</taxon>
        <taxon>Tracheophyta</taxon>
        <taxon>Spermatophyta</taxon>
        <taxon>Magnoliopsida</taxon>
        <taxon>Liliopsida</taxon>
        <taxon>Poales</taxon>
        <taxon>Poaceae</taxon>
        <taxon>BOP clade</taxon>
        <taxon>Oryzoideae</taxon>
        <taxon>Oryzeae</taxon>
        <taxon>Oryzinae</taxon>
        <taxon>Oryza</taxon>
        <taxon>Oryza sativa</taxon>
    </lineage>
</organism>